<comment type="function">
    <text evidence="1">The alpha subunit is responsible for the aldol cleavage of indoleglycerol phosphate to indole and glyceraldehyde 3-phosphate.</text>
</comment>
<comment type="catalytic activity">
    <reaction evidence="1">
        <text>(1S,2R)-1-C-(indol-3-yl)glycerol 3-phosphate + L-serine = D-glyceraldehyde 3-phosphate + L-tryptophan + H2O</text>
        <dbReference type="Rhea" id="RHEA:10532"/>
        <dbReference type="ChEBI" id="CHEBI:15377"/>
        <dbReference type="ChEBI" id="CHEBI:33384"/>
        <dbReference type="ChEBI" id="CHEBI:57912"/>
        <dbReference type="ChEBI" id="CHEBI:58866"/>
        <dbReference type="ChEBI" id="CHEBI:59776"/>
        <dbReference type="EC" id="4.2.1.20"/>
    </reaction>
</comment>
<comment type="pathway">
    <text evidence="1">Amino-acid biosynthesis; L-tryptophan biosynthesis; L-tryptophan from chorismate: step 5/5.</text>
</comment>
<comment type="subunit">
    <text evidence="1">Tetramer of two alpha and two beta chains.</text>
</comment>
<comment type="similarity">
    <text evidence="1">Belongs to the TrpA family.</text>
</comment>
<gene>
    <name evidence="1" type="primary">trpA</name>
    <name type="ordered locus">Acry_1329</name>
</gene>
<protein>
    <recommendedName>
        <fullName evidence="1">Tryptophan synthase alpha chain</fullName>
        <ecNumber evidence="1">4.2.1.20</ecNumber>
    </recommendedName>
</protein>
<accession>A5FY58</accession>
<keyword id="KW-0028">Amino-acid biosynthesis</keyword>
<keyword id="KW-0057">Aromatic amino acid biosynthesis</keyword>
<keyword id="KW-0456">Lyase</keyword>
<keyword id="KW-1185">Reference proteome</keyword>
<keyword id="KW-0822">Tryptophan biosynthesis</keyword>
<dbReference type="EC" id="4.2.1.20" evidence="1"/>
<dbReference type="EMBL" id="CP000697">
    <property type="protein sequence ID" value="ABQ30540.1"/>
    <property type="molecule type" value="Genomic_DNA"/>
</dbReference>
<dbReference type="RefSeq" id="WP_011942165.1">
    <property type="nucleotide sequence ID" value="NC_009484.1"/>
</dbReference>
<dbReference type="SMR" id="A5FY58"/>
<dbReference type="STRING" id="349163.Acry_1329"/>
<dbReference type="KEGG" id="acr:Acry_1329"/>
<dbReference type="eggNOG" id="COG0159">
    <property type="taxonomic scope" value="Bacteria"/>
</dbReference>
<dbReference type="HOGENOM" id="CLU_016734_0_4_5"/>
<dbReference type="UniPathway" id="UPA00035">
    <property type="reaction ID" value="UER00044"/>
</dbReference>
<dbReference type="Proteomes" id="UP000000245">
    <property type="component" value="Chromosome"/>
</dbReference>
<dbReference type="GO" id="GO:0005829">
    <property type="term" value="C:cytosol"/>
    <property type="evidence" value="ECO:0007669"/>
    <property type="project" value="TreeGrafter"/>
</dbReference>
<dbReference type="GO" id="GO:0004834">
    <property type="term" value="F:tryptophan synthase activity"/>
    <property type="evidence" value="ECO:0007669"/>
    <property type="project" value="UniProtKB-UniRule"/>
</dbReference>
<dbReference type="CDD" id="cd04724">
    <property type="entry name" value="Tryptophan_synthase_alpha"/>
    <property type="match status" value="1"/>
</dbReference>
<dbReference type="FunFam" id="3.20.20.70:FF:000037">
    <property type="entry name" value="Tryptophan synthase alpha chain"/>
    <property type="match status" value="1"/>
</dbReference>
<dbReference type="Gene3D" id="3.20.20.70">
    <property type="entry name" value="Aldolase class I"/>
    <property type="match status" value="1"/>
</dbReference>
<dbReference type="HAMAP" id="MF_00131">
    <property type="entry name" value="Trp_synth_alpha"/>
    <property type="match status" value="1"/>
</dbReference>
<dbReference type="InterPro" id="IPR013785">
    <property type="entry name" value="Aldolase_TIM"/>
</dbReference>
<dbReference type="InterPro" id="IPR011060">
    <property type="entry name" value="RibuloseP-bd_barrel"/>
</dbReference>
<dbReference type="InterPro" id="IPR018204">
    <property type="entry name" value="Trp_synthase_alpha_AS"/>
</dbReference>
<dbReference type="InterPro" id="IPR002028">
    <property type="entry name" value="Trp_synthase_suA"/>
</dbReference>
<dbReference type="NCBIfam" id="TIGR00262">
    <property type="entry name" value="trpA"/>
    <property type="match status" value="1"/>
</dbReference>
<dbReference type="PANTHER" id="PTHR43406:SF1">
    <property type="entry name" value="TRYPTOPHAN SYNTHASE ALPHA CHAIN, CHLOROPLASTIC"/>
    <property type="match status" value="1"/>
</dbReference>
<dbReference type="PANTHER" id="PTHR43406">
    <property type="entry name" value="TRYPTOPHAN SYNTHASE, ALPHA CHAIN"/>
    <property type="match status" value="1"/>
</dbReference>
<dbReference type="Pfam" id="PF00290">
    <property type="entry name" value="Trp_syntA"/>
    <property type="match status" value="1"/>
</dbReference>
<dbReference type="SUPFAM" id="SSF51366">
    <property type="entry name" value="Ribulose-phoshate binding barrel"/>
    <property type="match status" value="1"/>
</dbReference>
<dbReference type="PROSITE" id="PS00167">
    <property type="entry name" value="TRP_SYNTHASE_ALPHA"/>
    <property type="match status" value="1"/>
</dbReference>
<evidence type="ECO:0000255" key="1">
    <source>
        <dbReference type="HAMAP-Rule" id="MF_00131"/>
    </source>
</evidence>
<proteinExistence type="inferred from homology"/>
<feature type="chain" id="PRO_1000018158" description="Tryptophan synthase alpha chain">
    <location>
        <begin position="1"/>
        <end position="276"/>
    </location>
</feature>
<feature type="active site" description="Proton acceptor" evidence="1">
    <location>
        <position position="49"/>
    </location>
</feature>
<feature type="active site" description="Proton acceptor" evidence="1">
    <location>
        <position position="60"/>
    </location>
</feature>
<organism>
    <name type="scientific">Acidiphilium cryptum (strain JF-5)</name>
    <dbReference type="NCBI Taxonomy" id="349163"/>
    <lineage>
        <taxon>Bacteria</taxon>
        <taxon>Pseudomonadati</taxon>
        <taxon>Pseudomonadota</taxon>
        <taxon>Alphaproteobacteria</taxon>
        <taxon>Acetobacterales</taxon>
        <taxon>Acidocellaceae</taxon>
        <taxon>Acidiphilium</taxon>
    </lineage>
</organism>
<name>TRPA_ACICJ</name>
<sequence length="276" mass="28894">MSRIAATFARLRDEGRAGLIPFVEAFDPDRETSATLLAGMAARGADLIEIGMPFTDPMADGPTIQQAGRRALRAGATLAGTLGLVRDFRAVNDTVPLILMGYLNPILSYGVERFTADAAAAGVDGVIVVDLPTEEADLLLPHLRQHRIDLIRLVAPTTTDERLPVVLNDSSGFVYYVSITGITGTRTASAEDLARDIPRVRKATDMPIAVGFGVRTPAQAATVARFADAAVVASALIDKLAAGLDADGKAPPAIVEAVLDDVAALAAAVRGERRAA</sequence>
<reference key="1">
    <citation type="submission" date="2007-05" db="EMBL/GenBank/DDBJ databases">
        <title>Complete sequence of chromosome of Acidiphilium cryptum JF-5.</title>
        <authorList>
            <consortium name="US DOE Joint Genome Institute"/>
            <person name="Copeland A."/>
            <person name="Lucas S."/>
            <person name="Lapidus A."/>
            <person name="Barry K."/>
            <person name="Detter J.C."/>
            <person name="Glavina del Rio T."/>
            <person name="Hammon N."/>
            <person name="Israni S."/>
            <person name="Dalin E."/>
            <person name="Tice H."/>
            <person name="Pitluck S."/>
            <person name="Sims D."/>
            <person name="Brettin T."/>
            <person name="Bruce D."/>
            <person name="Han C."/>
            <person name="Schmutz J."/>
            <person name="Larimer F."/>
            <person name="Land M."/>
            <person name="Hauser L."/>
            <person name="Kyrpides N."/>
            <person name="Kim E."/>
            <person name="Magnuson T."/>
            <person name="Richardson P."/>
        </authorList>
    </citation>
    <scope>NUCLEOTIDE SEQUENCE [LARGE SCALE GENOMIC DNA]</scope>
    <source>
        <strain>JF-5</strain>
    </source>
</reference>